<comment type="function">
    <text evidence="1">Uptake of L-rhamnose across the cytoplasmic membrane with the concomitant transport of protons into the cell (symport system).</text>
</comment>
<comment type="catalytic activity">
    <reaction evidence="1">
        <text>L-rhamnopyranose(in) + H(+)(in) = L-rhamnopyranose(out) + H(+)(out)</text>
        <dbReference type="Rhea" id="RHEA:29947"/>
        <dbReference type="ChEBI" id="CHEBI:15378"/>
        <dbReference type="ChEBI" id="CHEBI:62346"/>
    </reaction>
    <physiologicalReaction direction="right-to-left" evidence="1">
        <dbReference type="Rhea" id="RHEA:29949"/>
    </physiologicalReaction>
</comment>
<comment type="subcellular location">
    <subcellularLocation>
        <location evidence="1">Cell inner membrane</location>
        <topology evidence="1">Multi-pass membrane protein</topology>
    </subcellularLocation>
</comment>
<comment type="similarity">
    <text evidence="1">Belongs to the L-rhamnose transporter (TC 2.A.7.6) family.</text>
</comment>
<evidence type="ECO:0000255" key="1">
    <source>
        <dbReference type="HAMAP-Rule" id="MF_01532"/>
    </source>
</evidence>
<name>RHAT_SALPA</name>
<proteinExistence type="inferred from homology"/>
<sequence>MSNAITMGIFWHLIGAASAACFYAPFKQVKQWSWETMWSVGGIVSWLILPWTISALLLPDFWAYYGQFNLSTLLPVFLFGAMWGIGNINYGLTMRYLGMSMGIGIAIGITLIVGTLMTPIINGNFDVLIHTEGGRMTLLGVFVALIGVGIVTRAGQLKERKMGIKAEEFNLKKGLLLAVICGIFSAGMSFAMNAAKPMHEAAAALGVDPLYVALPSYVVIMGGGALVNLGFCFIRLAKVQNLSIKADFSLARPLIISNILLSALGGLMWYLQFFFYAWGHARIPAQYDYMSWMLHMSFYVLCGGLVGLVLKEWKNAGRRPVAVLSLGCVVIIIAANIVGLGMAS</sequence>
<feature type="chain" id="PRO_0000208278" description="L-rhamnose-proton symporter">
    <location>
        <begin position="1"/>
        <end position="344"/>
    </location>
</feature>
<feature type="transmembrane region" description="Helical" evidence="1">
    <location>
        <begin position="4"/>
        <end position="24"/>
    </location>
</feature>
<feature type="transmembrane region" description="Helical" evidence="1">
    <location>
        <begin position="38"/>
        <end position="58"/>
    </location>
</feature>
<feature type="transmembrane region" description="Helical" evidence="1">
    <location>
        <begin position="68"/>
        <end position="88"/>
    </location>
</feature>
<feature type="transmembrane region" description="Helical" evidence="1">
    <location>
        <begin position="101"/>
        <end position="121"/>
    </location>
</feature>
<feature type="transmembrane region" description="Helical" evidence="1">
    <location>
        <begin position="137"/>
        <end position="157"/>
    </location>
</feature>
<feature type="transmembrane region" description="Helical" evidence="1">
    <location>
        <begin position="175"/>
        <end position="195"/>
    </location>
</feature>
<feature type="transmembrane region" description="Helical" evidence="1">
    <location>
        <begin position="214"/>
        <end position="234"/>
    </location>
</feature>
<feature type="transmembrane region" description="Helical" evidence="1">
    <location>
        <begin position="259"/>
        <end position="279"/>
    </location>
</feature>
<feature type="transmembrane region" description="Helical" evidence="1">
    <location>
        <begin position="290"/>
        <end position="310"/>
    </location>
</feature>
<feature type="transmembrane region" description="Helical" evidence="1">
    <location>
        <begin position="321"/>
        <end position="341"/>
    </location>
</feature>
<protein>
    <recommendedName>
        <fullName evidence="1">L-rhamnose-proton symporter</fullName>
    </recommendedName>
    <alternativeName>
        <fullName evidence="1">L-rhamnose-H(+) transport protein</fullName>
    </alternativeName>
</protein>
<dbReference type="EMBL" id="CP000026">
    <property type="protein sequence ID" value="AAV79659.1"/>
    <property type="molecule type" value="Genomic_DNA"/>
</dbReference>
<dbReference type="RefSeq" id="WP_000063539.1">
    <property type="nucleotide sequence ID" value="NC_006511.1"/>
</dbReference>
<dbReference type="KEGG" id="spt:SPA3893"/>
<dbReference type="HOGENOM" id="CLU_066437_0_0_6"/>
<dbReference type="Proteomes" id="UP000008185">
    <property type="component" value="Chromosome"/>
</dbReference>
<dbReference type="GO" id="GO:0005886">
    <property type="term" value="C:plasma membrane"/>
    <property type="evidence" value="ECO:0007669"/>
    <property type="project" value="UniProtKB-SubCell"/>
</dbReference>
<dbReference type="GO" id="GO:0015153">
    <property type="term" value="F:rhamnose transmembrane transporter activity"/>
    <property type="evidence" value="ECO:0007669"/>
    <property type="project" value="UniProtKB-UniRule"/>
</dbReference>
<dbReference type="GO" id="GO:0015293">
    <property type="term" value="F:symporter activity"/>
    <property type="evidence" value="ECO:0007669"/>
    <property type="project" value="UniProtKB-KW"/>
</dbReference>
<dbReference type="HAMAP" id="MF_01532">
    <property type="entry name" value="RhaT"/>
    <property type="match status" value="1"/>
</dbReference>
<dbReference type="InterPro" id="IPR004673">
    <property type="entry name" value="L-rhamnose-proton_sym_RhaT"/>
</dbReference>
<dbReference type="NCBIfam" id="NF010021">
    <property type="entry name" value="PRK13499.1-1"/>
    <property type="match status" value="1"/>
</dbReference>
<dbReference type="NCBIfam" id="NF010023">
    <property type="entry name" value="PRK13499.1-3"/>
    <property type="match status" value="1"/>
</dbReference>
<dbReference type="NCBIfam" id="TIGR00776">
    <property type="entry name" value="RhaT"/>
    <property type="match status" value="1"/>
</dbReference>
<dbReference type="Pfam" id="PF06379">
    <property type="entry name" value="RhaT"/>
    <property type="match status" value="1"/>
</dbReference>
<gene>
    <name evidence="1" type="primary">rhaT</name>
    <name type="ordered locus">SPA3893</name>
</gene>
<keyword id="KW-0997">Cell inner membrane</keyword>
<keyword id="KW-1003">Cell membrane</keyword>
<keyword id="KW-0472">Membrane</keyword>
<keyword id="KW-0762">Sugar transport</keyword>
<keyword id="KW-0769">Symport</keyword>
<keyword id="KW-0812">Transmembrane</keyword>
<keyword id="KW-1133">Transmembrane helix</keyword>
<keyword id="KW-0813">Transport</keyword>
<organism>
    <name type="scientific">Salmonella paratyphi A (strain ATCC 9150 / SARB42)</name>
    <dbReference type="NCBI Taxonomy" id="295319"/>
    <lineage>
        <taxon>Bacteria</taxon>
        <taxon>Pseudomonadati</taxon>
        <taxon>Pseudomonadota</taxon>
        <taxon>Gammaproteobacteria</taxon>
        <taxon>Enterobacterales</taxon>
        <taxon>Enterobacteriaceae</taxon>
        <taxon>Salmonella</taxon>
    </lineage>
</organism>
<accession>Q5PKI0</accession>
<reference key="1">
    <citation type="journal article" date="2004" name="Nat. Genet.">
        <title>Comparison of genome degradation in Paratyphi A and Typhi, human-restricted serovars of Salmonella enterica that cause typhoid.</title>
        <authorList>
            <person name="McClelland M."/>
            <person name="Sanderson K.E."/>
            <person name="Clifton S.W."/>
            <person name="Latreille P."/>
            <person name="Porwollik S."/>
            <person name="Sabo A."/>
            <person name="Meyer R."/>
            <person name="Bieri T."/>
            <person name="Ozersky P."/>
            <person name="McLellan M."/>
            <person name="Harkins C.R."/>
            <person name="Wang C."/>
            <person name="Nguyen C."/>
            <person name="Berghoff A."/>
            <person name="Elliott G."/>
            <person name="Kohlberg S."/>
            <person name="Strong C."/>
            <person name="Du F."/>
            <person name="Carter J."/>
            <person name="Kremizki C."/>
            <person name="Layman D."/>
            <person name="Leonard S."/>
            <person name="Sun H."/>
            <person name="Fulton L."/>
            <person name="Nash W."/>
            <person name="Miner T."/>
            <person name="Minx P."/>
            <person name="Delehaunty K."/>
            <person name="Fronick C."/>
            <person name="Magrini V."/>
            <person name="Nhan M."/>
            <person name="Warren W."/>
            <person name="Florea L."/>
            <person name="Spieth J."/>
            <person name="Wilson R.K."/>
        </authorList>
    </citation>
    <scope>NUCLEOTIDE SEQUENCE [LARGE SCALE GENOMIC DNA]</scope>
    <source>
        <strain>ATCC 9150 / SARB42</strain>
    </source>
</reference>